<dbReference type="EC" id="4.2.1.11" evidence="1"/>
<dbReference type="EMBL" id="FM177140">
    <property type="protein sequence ID" value="CAQ66218.1"/>
    <property type="molecule type" value="Genomic_DNA"/>
</dbReference>
<dbReference type="SMR" id="B3WCW7"/>
<dbReference type="DrugBank" id="DB09325">
    <property type="generic name" value="Sodium fluoride"/>
</dbReference>
<dbReference type="KEGG" id="lcb:LCABL_11330"/>
<dbReference type="HOGENOM" id="CLU_031223_2_1_9"/>
<dbReference type="UniPathway" id="UPA00109">
    <property type="reaction ID" value="UER00187"/>
</dbReference>
<dbReference type="GO" id="GO:0009986">
    <property type="term" value="C:cell surface"/>
    <property type="evidence" value="ECO:0007669"/>
    <property type="project" value="UniProtKB-SubCell"/>
</dbReference>
<dbReference type="GO" id="GO:0005576">
    <property type="term" value="C:extracellular region"/>
    <property type="evidence" value="ECO:0007669"/>
    <property type="project" value="UniProtKB-SubCell"/>
</dbReference>
<dbReference type="GO" id="GO:0000015">
    <property type="term" value="C:phosphopyruvate hydratase complex"/>
    <property type="evidence" value="ECO:0007669"/>
    <property type="project" value="InterPro"/>
</dbReference>
<dbReference type="GO" id="GO:0000287">
    <property type="term" value="F:magnesium ion binding"/>
    <property type="evidence" value="ECO:0007669"/>
    <property type="project" value="UniProtKB-UniRule"/>
</dbReference>
<dbReference type="GO" id="GO:0004634">
    <property type="term" value="F:phosphopyruvate hydratase activity"/>
    <property type="evidence" value="ECO:0007669"/>
    <property type="project" value="UniProtKB-UniRule"/>
</dbReference>
<dbReference type="GO" id="GO:0006096">
    <property type="term" value="P:glycolytic process"/>
    <property type="evidence" value="ECO:0007669"/>
    <property type="project" value="UniProtKB-UniRule"/>
</dbReference>
<dbReference type="CDD" id="cd03313">
    <property type="entry name" value="enolase"/>
    <property type="match status" value="1"/>
</dbReference>
<dbReference type="FunFam" id="3.20.20.120:FF:000001">
    <property type="entry name" value="Enolase"/>
    <property type="match status" value="1"/>
</dbReference>
<dbReference type="FunFam" id="3.30.390.10:FF:000001">
    <property type="entry name" value="Enolase"/>
    <property type="match status" value="1"/>
</dbReference>
<dbReference type="Gene3D" id="3.20.20.120">
    <property type="entry name" value="Enolase-like C-terminal domain"/>
    <property type="match status" value="1"/>
</dbReference>
<dbReference type="Gene3D" id="3.30.390.10">
    <property type="entry name" value="Enolase-like, N-terminal domain"/>
    <property type="match status" value="1"/>
</dbReference>
<dbReference type="HAMAP" id="MF_00318">
    <property type="entry name" value="Enolase"/>
    <property type="match status" value="1"/>
</dbReference>
<dbReference type="InterPro" id="IPR000941">
    <property type="entry name" value="Enolase"/>
</dbReference>
<dbReference type="InterPro" id="IPR036849">
    <property type="entry name" value="Enolase-like_C_sf"/>
</dbReference>
<dbReference type="InterPro" id="IPR029017">
    <property type="entry name" value="Enolase-like_N"/>
</dbReference>
<dbReference type="InterPro" id="IPR020810">
    <property type="entry name" value="Enolase_C"/>
</dbReference>
<dbReference type="InterPro" id="IPR020809">
    <property type="entry name" value="Enolase_CS"/>
</dbReference>
<dbReference type="InterPro" id="IPR020811">
    <property type="entry name" value="Enolase_N"/>
</dbReference>
<dbReference type="NCBIfam" id="TIGR01060">
    <property type="entry name" value="eno"/>
    <property type="match status" value="1"/>
</dbReference>
<dbReference type="PANTHER" id="PTHR11902">
    <property type="entry name" value="ENOLASE"/>
    <property type="match status" value="1"/>
</dbReference>
<dbReference type="PANTHER" id="PTHR11902:SF1">
    <property type="entry name" value="ENOLASE"/>
    <property type="match status" value="1"/>
</dbReference>
<dbReference type="Pfam" id="PF00113">
    <property type="entry name" value="Enolase_C"/>
    <property type="match status" value="1"/>
</dbReference>
<dbReference type="Pfam" id="PF03952">
    <property type="entry name" value="Enolase_N"/>
    <property type="match status" value="1"/>
</dbReference>
<dbReference type="PIRSF" id="PIRSF001400">
    <property type="entry name" value="Enolase"/>
    <property type="match status" value="1"/>
</dbReference>
<dbReference type="PRINTS" id="PR00148">
    <property type="entry name" value="ENOLASE"/>
</dbReference>
<dbReference type="SFLD" id="SFLDF00002">
    <property type="entry name" value="enolase"/>
    <property type="match status" value="1"/>
</dbReference>
<dbReference type="SFLD" id="SFLDG00178">
    <property type="entry name" value="enolase"/>
    <property type="match status" value="1"/>
</dbReference>
<dbReference type="SMART" id="SM01192">
    <property type="entry name" value="Enolase_C"/>
    <property type="match status" value="1"/>
</dbReference>
<dbReference type="SMART" id="SM01193">
    <property type="entry name" value="Enolase_N"/>
    <property type="match status" value="1"/>
</dbReference>
<dbReference type="SUPFAM" id="SSF51604">
    <property type="entry name" value="Enolase C-terminal domain-like"/>
    <property type="match status" value="1"/>
</dbReference>
<dbReference type="SUPFAM" id="SSF54826">
    <property type="entry name" value="Enolase N-terminal domain-like"/>
    <property type="match status" value="1"/>
</dbReference>
<dbReference type="PROSITE" id="PS00164">
    <property type="entry name" value="ENOLASE"/>
    <property type="match status" value="1"/>
</dbReference>
<reference key="1">
    <citation type="submission" date="2008-06" db="EMBL/GenBank/DDBJ databases">
        <title>Lactobacillus casei BL23 complete genome sequence.</title>
        <authorList>
            <person name="Maze A."/>
            <person name="Boel G."/>
            <person name="Bourand A."/>
            <person name="Loux V."/>
            <person name="Gibrat J.F."/>
            <person name="Zuniga M."/>
            <person name="Hartke A."/>
            <person name="Deutscher J."/>
        </authorList>
    </citation>
    <scope>NUCLEOTIDE SEQUENCE [LARGE SCALE GENOMIC DNA]</scope>
    <source>
        <strain>BL23</strain>
    </source>
</reference>
<feature type="chain" id="PRO_1000115876" description="Enolase">
    <location>
        <begin position="1"/>
        <end position="434"/>
    </location>
</feature>
<feature type="active site" description="Proton donor" evidence="1">
    <location>
        <position position="205"/>
    </location>
</feature>
<feature type="active site" description="Proton acceptor" evidence="1">
    <location>
        <position position="341"/>
    </location>
</feature>
<feature type="binding site" evidence="1">
    <location>
        <position position="163"/>
    </location>
    <ligand>
        <name>(2R)-2-phosphoglycerate</name>
        <dbReference type="ChEBI" id="CHEBI:58289"/>
    </ligand>
</feature>
<feature type="binding site" evidence="1">
    <location>
        <position position="242"/>
    </location>
    <ligand>
        <name>Mg(2+)</name>
        <dbReference type="ChEBI" id="CHEBI:18420"/>
    </ligand>
</feature>
<feature type="binding site" evidence="1">
    <location>
        <position position="289"/>
    </location>
    <ligand>
        <name>Mg(2+)</name>
        <dbReference type="ChEBI" id="CHEBI:18420"/>
    </ligand>
</feature>
<feature type="binding site" evidence="1">
    <location>
        <position position="316"/>
    </location>
    <ligand>
        <name>Mg(2+)</name>
        <dbReference type="ChEBI" id="CHEBI:18420"/>
    </ligand>
</feature>
<feature type="binding site" evidence="1">
    <location>
        <position position="341"/>
    </location>
    <ligand>
        <name>(2R)-2-phosphoglycerate</name>
        <dbReference type="ChEBI" id="CHEBI:58289"/>
    </ligand>
</feature>
<feature type="binding site" evidence="1">
    <location>
        <position position="370"/>
    </location>
    <ligand>
        <name>(2R)-2-phosphoglycerate</name>
        <dbReference type="ChEBI" id="CHEBI:58289"/>
    </ligand>
</feature>
<feature type="binding site" evidence="1">
    <location>
        <position position="371"/>
    </location>
    <ligand>
        <name>(2R)-2-phosphoglycerate</name>
        <dbReference type="ChEBI" id="CHEBI:58289"/>
    </ligand>
</feature>
<feature type="binding site" evidence="1">
    <location>
        <position position="392"/>
    </location>
    <ligand>
        <name>(2R)-2-phosphoglycerate</name>
        <dbReference type="ChEBI" id="CHEBI:58289"/>
    </ligand>
</feature>
<accession>B3WCW7</accession>
<gene>
    <name evidence="1" type="primary">eno</name>
    <name type="ordered locus">LCABL_11330</name>
</gene>
<evidence type="ECO:0000255" key="1">
    <source>
        <dbReference type="HAMAP-Rule" id="MF_00318"/>
    </source>
</evidence>
<comment type="function">
    <text evidence="1">Catalyzes the reversible conversion of 2-phosphoglycerate (2-PG) into phosphoenolpyruvate (PEP). It is essential for the degradation of carbohydrates via glycolysis.</text>
</comment>
<comment type="catalytic activity">
    <reaction evidence="1">
        <text>(2R)-2-phosphoglycerate = phosphoenolpyruvate + H2O</text>
        <dbReference type="Rhea" id="RHEA:10164"/>
        <dbReference type="ChEBI" id="CHEBI:15377"/>
        <dbReference type="ChEBI" id="CHEBI:58289"/>
        <dbReference type="ChEBI" id="CHEBI:58702"/>
        <dbReference type="EC" id="4.2.1.11"/>
    </reaction>
</comment>
<comment type="cofactor">
    <cofactor evidence="1">
        <name>Mg(2+)</name>
        <dbReference type="ChEBI" id="CHEBI:18420"/>
    </cofactor>
    <text evidence="1">Binds a second Mg(2+) ion via substrate during catalysis.</text>
</comment>
<comment type="pathway">
    <text evidence="1">Carbohydrate degradation; glycolysis; pyruvate from D-glyceraldehyde 3-phosphate: step 4/5.</text>
</comment>
<comment type="subcellular location">
    <subcellularLocation>
        <location evidence="1">Cytoplasm</location>
    </subcellularLocation>
    <subcellularLocation>
        <location evidence="1">Secreted</location>
    </subcellularLocation>
    <subcellularLocation>
        <location evidence="1">Cell surface</location>
    </subcellularLocation>
    <text evidence="1">Fractions of enolase are present in both the cytoplasm and on the cell surface.</text>
</comment>
<comment type="similarity">
    <text evidence="1">Belongs to the enolase family.</text>
</comment>
<sequence length="434" mass="47111">MSIITDVLAREVLDSRGNPTVEVELYTEDGGFGRALVPSGASTGEHEAVELRDGDKDRFGGKGVLKAVGHVNNEIAKAVIGHDVTEQRLIDQTMIDLDGTPNKGKFGANAILGVSLAAARAAADEVGLPLYQYLGGPNAHVLPTPMMNVLNGGAHSTNTVDFQEFMIMPVGAKSVREAVRMGSETFHALQALLKSKGDITAVGDEGGFAPNLKDNEEAFELLVEAIKKAGYKPGDDIALAFDVAASEMYDAESKTYTTKWSNPDKKYTTEEWTDMIDGYINKYPIVSVEDPIDENDWEGWQTFTKKMGDKVQIVGDDLFVTNTDYLKKGIDMGVANSILIKLNQIGTLTETFEAIEMAKEAGYTAVVSHRSGETEDTTIADLVVATNAGQIKTGSMSRTDRIAKYNQLMRIEDQLGAQSLYKGRKSFYNVKAID</sequence>
<keyword id="KW-0963">Cytoplasm</keyword>
<keyword id="KW-0324">Glycolysis</keyword>
<keyword id="KW-0456">Lyase</keyword>
<keyword id="KW-0460">Magnesium</keyword>
<keyword id="KW-0479">Metal-binding</keyword>
<keyword id="KW-0964">Secreted</keyword>
<protein>
    <recommendedName>
        <fullName evidence="1">Enolase</fullName>
        <ecNumber evidence="1">4.2.1.11</ecNumber>
    </recommendedName>
    <alternativeName>
        <fullName evidence="1">2-phospho-D-glycerate hydro-lyase</fullName>
    </alternativeName>
    <alternativeName>
        <fullName evidence="1">2-phosphoglycerate dehydratase</fullName>
    </alternativeName>
</protein>
<name>ENO_LACCB</name>
<proteinExistence type="inferred from homology"/>
<organism>
    <name type="scientific">Lacticaseibacillus casei (strain BL23)</name>
    <name type="common">Lactobacillus casei</name>
    <dbReference type="NCBI Taxonomy" id="543734"/>
    <lineage>
        <taxon>Bacteria</taxon>
        <taxon>Bacillati</taxon>
        <taxon>Bacillota</taxon>
        <taxon>Bacilli</taxon>
        <taxon>Lactobacillales</taxon>
        <taxon>Lactobacillaceae</taxon>
        <taxon>Lacticaseibacillus</taxon>
    </lineage>
</organism>